<keyword id="KW-0997">Cell inner membrane</keyword>
<keyword id="KW-1003">Cell membrane</keyword>
<keyword id="KW-0444">Lipid biosynthesis</keyword>
<keyword id="KW-0443">Lipid metabolism</keyword>
<keyword id="KW-0472">Membrane</keyword>
<keyword id="KW-0594">Phospholipid biosynthesis</keyword>
<keyword id="KW-1208">Phospholipid metabolism</keyword>
<keyword id="KW-0808">Transferase</keyword>
<keyword id="KW-0812">Transmembrane</keyword>
<keyword id="KW-1133">Transmembrane helix</keyword>
<reference key="1">
    <citation type="journal article" date="2008" name="BMC Genomics">
        <title>The missing link: Bordetella petrii is endowed with both the metabolic versatility of environmental bacteria and virulence traits of pathogenic Bordetellae.</title>
        <authorList>
            <person name="Gross R."/>
            <person name="Guzman C.A."/>
            <person name="Sebaihia M."/>
            <person name="Martin dos Santos V.A.P."/>
            <person name="Pieper D.H."/>
            <person name="Koebnik R."/>
            <person name="Lechner M."/>
            <person name="Bartels D."/>
            <person name="Buhrmester J."/>
            <person name="Choudhuri J.V."/>
            <person name="Ebensen T."/>
            <person name="Gaigalat L."/>
            <person name="Herrmann S."/>
            <person name="Khachane A.N."/>
            <person name="Larisch C."/>
            <person name="Link S."/>
            <person name="Linke B."/>
            <person name="Meyer F."/>
            <person name="Mormann S."/>
            <person name="Nakunst D."/>
            <person name="Rueckert C."/>
            <person name="Schneiker-Bekel S."/>
            <person name="Schulze K."/>
            <person name="Voerholter F.-J."/>
            <person name="Yevsa T."/>
            <person name="Engle J.T."/>
            <person name="Goldman W.E."/>
            <person name="Puehler A."/>
            <person name="Goebel U.B."/>
            <person name="Goesmann A."/>
            <person name="Bloecker H."/>
            <person name="Kaiser O."/>
            <person name="Martinez-Arias R."/>
        </authorList>
    </citation>
    <scope>NUCLEOTIDE SEQUENCE [LARGE SCALE GENOMIC DNA]</scope>
    <source>
        <strain>ATCC BAA-461 / DSM 12804 / CCUG 43448</strain>
    </source>
</reference>
<evidence type="ECO:0000255" key="1">
    <source>
        <dbReference type="HAMAP-Rule" id="MF_01043"/>
    </source>
</evidence>
<organism>
    <name type="scientific">Bordetella petrii (strain ATCC BAA-461 / DSM 12804 / CCUG 43448)</name>
    <dbReference type="NCBI Taxonomy" id="340100"/>
    <lineage>
        <taxon>Bacteria</taxon>
        <taxon>Pseudomonadati</taxon>
        <taxon>Pseudomonadota</taxon>
        <taxon>Betaproteobacteria</taxon>
        <taxon>Burkholderiales</taxon>
        <taxon>Alcaligenaceae</taxon>
        <taxon>Bordetella</taxon>
    </lineage>
</organism>
<protein>
    <recommendedName>
        <fullName evidence="1">Glycerol-3-phosphate acyltransferase</fullName>
    </recommendedName>
    <alternativeName>
        <fullName evidence="1">Acyl-PO4 G3P acyltransferase</fullName>
    </alternativeName>
    <alternativeName>
        <fullName evidence="1">Acyl-phosphate--glycerol-3-phosphate acyltransferase</fullName>
    </alternativeName>
    <alternativeName>
        <fullName evidence="1">G3P acyltransferase</fullName>
        <shortName evidence="1">GPAT</shortName>
        <ecNumber evidence="1">2.3.1.275</ecNumber>
    </alternativeName>
    <alternativeName>
        <fullName evidence="1">Lysophosphatidic acid synthase</fullName>
        <shortName evidence="1">LPA synthase</shortName>
    </alternativeName>
</protein>
<gene>
    <name evidence="1" type="primary">plsY</name>
    <name type="ordered locus">Bpet2550</name>
</gene>
<sequence length="212" mass="22244">MVQTAPSIFLSAALIALAYLIGSIPFAVVVSKLMGLQDPRSYGSKNPGATNVLRSGNKAAAALTLLGDAFKGWFALWLAQMLAPGLSWTVFALVALAAFLGHLYPVFLGFKGGKGVATALGILLAIHPGLALATAATWVIIAVFFRYSSLAALVAAFFAPVYYLFGSGVAWYAQGPVGVALAIITLLLFYRHRANIARLLAGTESRIGAKKK</sequence>
<name>PLSY_BORPD</name>
<comment type="function">
    <text evidence="1">Catalyzes the transfer of an acyl group from acyl-phosphate (acyl-PO(4)) to glycerol-3-phosphate (G3P) to form lysophosphatidic acid (LPA). This enzyme utilizes acyl-phosphate as fatty acyl donor, but not acyl-CoA or acyl-ACP.</text>
</comment>
<comment type="catalytic activity">
    <reaction evidence="1">
        <text>an acyl phosphate + sn-glycerol 3-phosphate = a 1-acyl-sn-glycero-3-phosphate + phosphate</text>
        <dbReference type="Rhea" id="RHEA:34075"/>
        <dbReference type="ChEBI" id="CHEBI:43474"/>
        <dbReference type="ChEBI" id="CHEBI:57597"/>
        <dbReference type="ChEBI" id="CHEBI:57970"/>
        <dbReference type="ChEBI" id="CHEBI:59918"/>
        <dbReference type="EC" id="2.3.1.275"/>
    </reaction>
</comment>
<comment type="pathway">
    <text evidence="1">Lipid metabolism; phospholipid metabolism.</text>
</comment>
<comment type="subunit">
    <text evidence="1">Probably interacts with PlsX.</text>
</comment>
<comment type="subcellular location">
    <subcellularLocation>
        <location evidence="1">Cell inner membrane</location>
        <topology evidence="1">Multi-pass membrane protein</topology>
    </subcellularLocation>
</comment>
<comment type="similarity">
    <text evidence="1">Belongs to the PlsY family.</text>
</comment>
<proteinExistence type="inferred from homology"/>
<dbReference type="EC" id="2.3.1.275" evidence="1"/>
<dbReference type="EMBL" id="AM902716">
    <property type="protein sequence ID" value="CAP42892.1"/>
    <property type="molecule type" value="Genomic_DNA"/>
</dbReference>
<dbReference type="SMR" id="A9IP09"/>
<dbReference type="STRING" id="94624.Bpet2550"/>
<dbReference type="KEGG" id="bpt:Bpet2550"/>
<dbReference type="eggNOG" id="COG0344">
    <property type="taxonomic scope" value="Bacteria"/>
</dbReference>
<dbReference type="UniPathway" id="UPA00085"/>
<dbReference type="Proteomes" id="UP000001225">
    <property type="component" value="Chromosome"/>
</dbReference>
<dbReference type="GO" id="GO:0005886">
    <property type="term" value="C:plasma membrane"/>
    <property type="evidence" value="ECO:0007669"/>
    <property type="project" value="UniProtKB-SubCell"/>
</dbReference>
<dbReference type="GO" id="GO:0043772">
    <property type="term" value="F:acyl-phosphate glycerol-3-phosphate acyltransferase activity"/>
    <property type="evidence" value="ECO:0007669"/>
    <property type="project" value="UniProtKB-UniRule"/>
</dbReference>
<dbReference type="GO" id="GO:0008654">
    <property type="term" value="P:phospholipid biosynthetic process"/>
    <property type="evidence" value="ECO:0007669"/>
    <property type="project" value="UniProtKB-UniRule"/>
</dbReference>
<dbReference type="HAMAP" id="MF_01043">
    <property type="entry name" value="PlsY"/>
    <property type="match status" value="1"/>
</dbReference>
<dbReference type="InterPro" id="IPR003811">
    <property type="entry name" value="G3P_acylTferase_PlsY"/>
</dbReference>
<dbReference type="NCBIfam" id="TIGR00023">
    <property type="entry name" value="glycerol-3-phosphate 1-O-acyltransferase PlsY"/>
    <property type="match status" value="1"/>
</dbReference>
<dbReference type="PANTHER" id="PTHR30309:SF0">
    <property type="entry name" value="GLYCEROL-3-PHOSPHATE ACYLTRANSFERASE-RELATED"/>
    <property type="match status" value="1"/>
</dbReference>
<dbReference type="PANTHER" id="PTHR30309">
    <property type="entry name" value="INNER MEMBRANE PROTEIN YGIH"/>
    <property type="match status" value="1"/>
</dbReference>
<dbReference type="Pfam" id="PF02660">
    <property type="entry name" value="G3P_acyltransf"/>
    <property type="match status" value="1"/>
</dbReference>
<dbReference type="SMART" id="SM01207">
    <property type="entry name" value="G3P_acyltransf"/>
    <property type="match status" value="1"/>
</dbReference>
<accession>A9IP09</accession>
<feature type="chain" id="PRO_1000136065" description="Glycerol-3-phosphate acyltransferase">
    <location>
        <begin position="1"/>
        <end position="212"/>
    </location>
</feature>
<feature type="transmembrane region" description="Helical" evidence="1">
    <location>
        <begin position="8"/>
        <end position="28"/>
    </location>
</feature>
<feature type="transmembrane region" description="Helical" evidence="1">
    <location>
        <begin position="59"/>
        <end position="79"/>
    </location>
</feature>
<feature type="transmembrane region" description="Helical" evidence="1">
    <location>
        <begin position="90"/>
        <end position="110"/>
    </location>
</feature>
<feature type="transmembrane region" description="Helical" evidence="1">
    <location>
        <begin position="122"/>
        <end position="142"/>
    </location>
</feature>
<feature type="transmembrane region" description="Helical" evidence="1">
    <location>
        <begin position="148"/>
        <end position="168"/>
    </location>
</feature>
<feature type="transmembrane region" description="Helical" evidence="1">
    <location>
        <begin position="169"/>
        <end position="189"/>
    </location>
</feature>